<gene>
    <name evidence="1" type="primary">arcA</name>
    <name type="ordered locus">bll7310</name>
</gene>
<proteinExistence type="inferred from homology"/>
<protein>
    <recommendedName>
        <fullName evidence="1">Arginine deiminase</fullName>
        <shortName evidence="1">ADI</shortName>
        <ecNumber evidence="1">3.5.3.6</ecNumber>
    </recommendedName>
    <alternativeName>
        <fullName evidence="1">Arginine dihydrolase</fullName>
        <shortName evidence="1">AD</shortName>
    </alternativeName>
</protein>
<feature type="chain" id="PRO_0000182205" description="Arginine deiminase">
    <location>
        <begin position="1"/>
        <end position="420"/>
    </location>
</feature>
<feature type="active site" description="Amidino-cysteine intermediate" evidence="1">
    <location>
        <position position="408"/>
    </location>
</feature>
<evidence type="ECO:0000255" key="1">
    <source>
        <dbReference type="HAMAP-Rule" id="MF_00242"/>
    </source>
</evidence>
<sequence>MAKQASESNRAFGVHSEVGQLRKVMVCSPGRAHQRLTPSNCDTLLFDDVLWVENAKRDHFDFVQKMRDRGVDVVEMHNLLTETVAIPEGRKWILDNQVVPDQVGLGLVDELRGYLESLTPRDLAETLIGGVSTHDFPDAHGGEMLKLVREAAGMTEYLLPPLPNTLYTRDTTCWIYGGVTLNSLYWPARHEEPILATAIYKFHPDFAGKVNVWWGDPTRDHGLATLEGGDVMPIGKGNVLIGLSERTSRQAISQVAAALFKKKAAERVIVAAMPKLRAAMHLDTVFTFADRDCVLLYPDIVNNIAAFSYRPADNSAGLELRKDEKPFVDVVAEALGLKKLRVVETGGNAYMRERTQWDSGANLVCASPGVVFAYDRNTYTNTLLRKEGIEVITIVGAELGRGRGGGHCMTCPITRDAVDY</sequence>
<name>ARCA_BRADU</name>
<keyword id="KW-0056">Arginine metabolism</keyword>
<keyword id="KW-0963">Cytoplasm</keyword>
<keyword id="KW-0378">Hydrolase</keyword>
<keyword id="KW-1185">Reference proteome</keyword>
<accession>Q89DX7</accession>
<reference key="1">
    <citation type="journal article" date="2002" name="DNA Res.">
        <title>Complete genomic sequence of nitrogen-fixing symbiotic bacterium Bradyrhizobium japonicum USDA110.</title>
        <authorList>
            <person name="Kaneko T."/>
            <person name="Nakamura Y."/>
            <person name="Sato S."/>
            <person name="Minamisawa K."/>
            <person name="Uchiumi T."/>
            <person name="Sasamoto S."/>
            <person name="Watanabe A."/>
            <person name="Idesawa K."/>
            <person name="Iriguchi M."/>
            <person name="Kawashima K."/>
            <person name="Kohara M."/>
            <person name="Matsumoto M."/>
            <person name="Shimpo S."/>
            <person name="Tsuruoka H."/>
            <person name="Wada T."/>
            <person name="Yamada M."/>
            <person name="Tabata S."/>
        </authorList>
    </citation>
    <scope>NUCLEOTIDE SEQUENCE [LARGE SCALE GENOMIC DNA]</scope>
    <source>
        <strain>JCM 10833 / BCRC 13528 / IAM 13628 / NBRC 14792 / USDA 110</strain>
    </source>
</reference>
<comment type="catalytic activity">
    <reaction evidence="1">
        <text>L-arginine + H2O = L-citrulline + NH4(+)</text>
        <dbReference type="Rhea" id="RHEA:19597"/>
        <dbReference type="ChEBI" id="CHEBI:15377"/>
        <dbReference type="ChEBI" id="CHEBI:28938"/>
        <dbReference type="ChEBI" id="CHEBI:32682"/>
        <dbReference type="ChEBI" id="CHEBI:57743"/>
        <dbReference type="EC" id="3.5.3.6"/>
    </reaction>
</comment>
<comment type="pathway">
    <text evidence="1">Amino-acid degradation; L-arginine degradation via ADI pathway; carbamoyl phosphate from L-arginine: step 1/2.</text>
</comment>
<comment type="subcellular location">
    <subcellularLocation>
        <location evidence="1">Cytoplasm</location>
    </subcellularLocation>
</comment>
<comment type="similarity">
    <text evidence="1">Belongs to the arginine deiminase family.</text>
</comment>
<dbReference type="EC" id="3.5.3.6" evidence="1"/>
<dbReference type="EMBL" id="BA000040">
    <property type="protein sequence ID" value="BAC52575.1"/>
    <property type="molecule type" value="Genomic_DNA"/>
</dbReference>
<dbReference type="RefSeq" id="NP_773950.1">
    <property type="nucleotide sequence ID" value="NC_004463.1"/>
</dbReference>
<dbReference type="RefSeq" id="WP_011090045.1">
    <property type="nucleotide sequence ID" value="NC_004463.1"/>
</dbReference>
<dbReference type="SMR" id="Q89DX7"/>
<dbReference type="STRING" id="224911.AAV28_34210"/>
<dbReference type="EnsemblBacteria" id="BAC52575">
    <property type="protein sequence ID" value="BAC52575"/>
    <property type="gene ID" value="BAC52575"/>
</dbReference>
<dbReference type="GeneID" id="46494268"/>
<dbReference type="KEGG" id="bja:bll7310"/>
<dbReference type="PATRIC" id="fig|224911.44.peg.7386"/>
<dbReference type="eggNOG" id="COG2235">
    <property type="taxonomic scope" value="Bacteria"/>
</dbReference>
<dbReference type="HOGENOM" id="CLU_052662_0_0_5"/>
<dbReference type="InParanoid" id="Q89DX7"/>
<dbReference type="OrthoDB" id="9807502at2"/>
<dbReference type="PhylomeDB" id="Q89DX7"/>
<dbReference type="UniPathway" id="UPA00254">
    <property type="reaction ID" value="UER00364"/>
</dbReference>
<dbReference type="Proteomes" id="UP000002526">
    <property type="component" value="Chromosome"/>
</dbReference>
<dbReference type="GO" id="GO:0005737">
    <property type="term" value="C:cytoplasm"/>
    <property type="evidence" value="ECO:0007669"/>
    <property type="project" value="UniProtKB-SubCell"/>
</dbReference>
<dbReference type="GO" id="GO:0016990">
    <property type="term" value="F:arginine deiminase activity"/>
    <property type="evidence" value="ECO:0000318"/>
    <property type="project" value="GO_Central"/>
</dbReference>
<dbReference type="GO" id="GO:0019547">
    <property type="term" value="P:arginine catabolic process to ornithine"/>
    <property type="evidence" value="ECO:0007669"/>
    <property type="project" value="UniProtKB-UniRule"/>
</dbReference>
<dbReference type="GO" id="GO:0019546">
    <property type="term" value="P:arginine deiminase pathway"/>
    <property type="evidence" value="ECO:0000318"/>
    <property type="project" value="GO_Central"/>
</dbReference>
<dbReference type="Gene3D" id="1.10.3930.10">
    <property type="entry name" value="Arginine deiminase"/>
    <property type="match status" value="1"/>
</dbReference>
<dbReference type="Gene3D" id="3.75.10.10">
    <property type="entry name" value="L-arginine/glycine Amidinotransferase, Chain A"/>
    <property type="match status" value="1"/>
</dbReference>
<dbReference type="HAMAP" id="MF_00242">
    <property type="entry name" value="Arg_deiminase"/>
    <property type="match status" value="1"/>
</dbReference>
<dbReference type="InterPro" id="IPR003876">
    <property type="entry name" value="Arg_deiminase"/>
</dbReference>
<dbReference type="NCBIfam" id="TIGR01078">
    <property type="entry name" value="arcA"/>
    <property type="match status" value="1"/>
</dbReference>
<dbReference type="NCBIfam" id="NF002381">
    <property type="entry name" value="PRK01388.1"/>
    <property type="match status" value="1"/>
</dbReference>
<dbReference type="PANTHER" id="PTHR47271">
    <property type="entry name" value="ARGININE DEIMINASE"/>
    <property type="match status" value="1"/>
</dbReference>
<dbReference type="PANTHER" id="PTHR47271:SF3">
    <property type="entry name" value="ARGININE DEIMINASE"/>
    <property type="match status" value="1"/>
</dbReference>
<dbReference type="Pfam" id="PF02274">
    <property type="entry name" value="ADI"/>
    <property type="match status" value="1"/>
</dbReference>
<dbReference type="PIRSF" id="PIRSF006356">
    <property type="entry name" value="Arg_deiminase"/>
    <property type="match status" value="1"/>
</dbReference>
<dbReference type="PRINTS" id="PR01466">
    <property type="entry name" value="ARGDEIMINASE"/>
</dbReference>
<dbReference type="SUPFAM" id="SSF55909">
    <property type="entry name" value="Pentein"/>
    <property type="match status" value="1"/>
</dbReference>
<organism>
    <name type="scientific">Bradyrhizobium diazoefficiens (strain JCM 10833 / BCRC 13528 / IAM 13628 / NBRC 14792 / USDA 110)</name>
    <dbReference type="NCBI Taxonomy" id="224911"/>
    <lineage>
        <taxon>Bacteria</taxon>
        <taxon>Pseudomonadati</taxon>
        <taxon>Pseudomonadota</taxon>
        <taxon>Alphaproteobacteria</taxon>
        <taxon>Hyphomicrobiales</taxon>
        <taxon>Nitrobacteraceae</taxon>
        <taxon>Bradyrhizobium</taxon>
    </lineage>
</organism>